<organism>
    <name type="scientific">Rickettsia conorii (strain ATCC VR-613 / Malish 7)</name>
    <dbReference type="NCBI Taxonomy" id="272944"/>
    <lineage>
        <taxon>Bacteria</taxon>
        <taxon>Pseudomonadati</taxon>
        <taxon>Pseudomonadota</taxon>
        <taxon>Alphaproteobacteria</taxon>
        <taxon>Rickettsiales</taxon>
        <taxon>Rickettsiaceae</taxon>
        <taxon>Rickettsieae</taxon>
        <taxon>Rickettsia</taxon>
        <taxon>spotted fever group</taxon>
    </lineage>
</organism>
<feature type="chain" id="PRO_0000184940" description="Iron-sulfur cluster carrier protein">
    <location>
        <begin position="1"/>
        <end position="319"/>
    </location>
</feature>
<feature type="binding site" evidence="1">
    <location>
        <begin position="105"/>
        <end position="112"/>
    </location>
    <ligand>
        <name>ATP</name>
        <dbReference type="ChEBI" id="CHEBI:30616"/>
    </ligand>
</feature>
<name>APBC_RICCN</name>
<accession>Q92JA4</accession>
<dbReference type="EMBL" id="AE006914">
    <property type="protein sequence ID" value="AAL02701.1"/>
    <property type="molecule type" value="Genomic_DNA"/>
</dbReference>
<dbReference type="PIR" id="C97720">
    <property type="entry name" value="C97720"/>
</dbReference>
<dbReference type="RefSeq" id="WP_010976839.1">
    <property type="nucleotide sequence ID" value="NC_003103.1"/>
</dbReference>
<dbReference type="SMR" id="Q92JA4"/>
<dbReference type="GeneID" id="928030"/>
<dbReference type="KEGG" id="rco:RC0163"/>
<dbReference type="PATRIC" id="fig|272944.4.peg.192"/>
<dbReference type="HOGENOM" id="CLU_024839_0_0_5"/>
<dbReference type="Proteomes" id="UP000000816">
    <property type="component" value="Chromosome"/>
</dbReference>
<dbReference type="GO" id="GO:0051539">
    <property type="term" value="F:4 iron, 4 sulfur cluster binding"/>
    <property type="evidence" value="ECO:0007669"/>
    <property type="project" value="TreeGrafter"/>
</dbReference>
<dbReference type="GO" id="GO:0005524">
    <property type="term" value="F:ATP binding"/>
    <property type="evidence" value="ECO:0007669"/>
    <property type="project" value="UniProtKB-UniRule"/>
</dbReference>
<dbReference type="GO" id="GO:0016887">
    <property type="term" value="F:ATP hydrolysis activity"/>
    <property type="evidence" value="ECO:0007669"/>
    <property type="project" value="UniProtKB-UniRule"/>
</dbReference>
<dbReference type="GO" id="GO:0140663">
    <property type="term" value="F:ATP-dependent FeS chaperone activity"/>
    <property type="evidence" value="ECO:0007669"/>
    <property type="project" value="InterPro"/>
</dbReference>
<dbReference type="GO" id="GO:0046872">
    <property type="term" value="F:metal ion binding"/>
    <property type="evidence" value="ECO:0007669"/>
    <property type="project" value="UniProtKB-KW"/>
</dbReference>
<dbReference type="GO" id="GO:0016226">
    <property type="term" value="P:iron-sulfur cluster assembly"/>
    <property type="evidence" value="ECO:0007669"/>
    <property type="project" value="InterPro"/>
</dbReference>
<dbReference type="CDD" id="cd02037">
    <property type="entry name" value="Mrp_NBP35"/>
    <property type="match status" value="1"/>
</dbReference>
<dbReference type="Gene3D" id="3.40.50.300">
    <property type="entry name" value="P-loop containing nucleotide triphosphate hydrolases"/>
    <property type="match status" value="1"/>
</dbReference>
<dbReference type="HAMAP" id="MF_02040">
    <property type="entry name" value="Mrp_NBP35"/>
    <property type="match status" value="1"/>
</dbReference>
<dbReference type="InterPro" id="IPR000808">
    <property type="entry name" value="Mrp-like_CS"/>
</dbReference>
<dbReference type="InterPro" id="IPR019591">
    <property type="entry name" value="Mrp/NBP35_ATP-bd"/>
</dbReference>
<dbReference type="InterPro" id="IPR044304">
    <property type="entry name" value="NUBPL-like"/>
</dbReference>
<dbReference type="InterPro" id="IPR027417">
    <property type="entry name" value="P-loop_NTPase"/>
</dbReference>
<dbReference type="InterPro" id="IPR033756">
    <property type="entry name" value="YlxH/NBP35"/>
</dbReference>
<dbReference type="PANTHER" id="PTHR42961">
    <property type="entry name" value="IRON-SULFUR PROTEIN NUBPL"/>
    <property type="match status" value="1"/>
</dbReference>
<dbReference type="PANTHER" id="PTHR42961:SF2">
    <property type="entry name" value="IRON-SULFUR PROTEIN NUBPL"/>
    <property type="match status" value="1"/>
</dbReference>
<dbReference type="Pfam" id="PF10609">
    <property type="entry name" value="ParA"/>
    <property type="match status" value="1"/>
</dbReference>
<dbReference type="SUPFAM" id="SSF52540">
    <property type="entry name" value="P-loop containing nucleoside triphosphate hydrolases"/>
    <property type="match status" value="1"/>
</dbReference>
<dbReference type="PROSITE" id="PS01215">
    <property type="entry name" value="MRP"/>
    <property type="match status" value="1"/>
</dbReference>
<gene>
    <name type="primary">mrp</name>
    <name type="ordered locus">RC0163</name>
</gene>
<proteinExistence type="inferred from homology"/>
<evidence type="ECO:0000255" key="1">
    <source>
        <dbReference type="HAMAP-Rule" id="MF_02040"/>
    </source>
</evidence>
<reference key="1">
    <citation type="journal article" date="2001" name="Science">
        <title>Mechanisms of evolution in Rickettsia conorii and R. prowazekii.</title>
        <authorList>
            <person name="Ogata H."/>
            <person name="Audic S."/>
            <person name="Renesto-Audiffren P."/>
            <person name="Fournier P.-E."/>
            <person name="Barbe V."/>
            <person name="Samson D."/>
            <person name="Roux V."/>
            <person name="Cossart P."/>
            <person name="Weissenbach J."/>
            <person name="Claverie J.-M."/>
            <person name="Raoult D."/>
        </authorList>
    </citation>
    <scope>NUCLEOTIDE SEQUENCE [LARGE SCALE GENOMIC DNA]</scope>
    <source>
        <strain>ATCC VR-613 / Malish 7</strain>
    </source>
</reference>
<protein>
    <recommendedName>
        <fullName evidence="1">Iron-sulfur cluster carrier protein</fullName>
    </recommendedName>
</protein>
<comment type="function">
    <text evidence="1">Binds and transfers iron-sulfur (Fe-S) clusters to target apoproteins. Can hydrolyze ATP.</text>
</comment>
<comment type="subunit">
    <text evidence="1">Homodimer.</text>
</comment>
<comment type="similarity">
    <text evidence="1">Belongs to the Mrp/NBP35 ATP-binding proteins family.</text>
</comment>
<sequence length="319" mass="35536">MANLHQRQIIDKIQHITFKDGTFLNEVISDIIIKGNNIGFSIDISGKNKLEAEEIRLKAINKLNEISEVNKITIVFTESKPMEKKVQKPKHFVENVKKIILVASGKGGVGKSTISALIAQQLSLANYRVGIVDADIYGPSIPHIFGINEVPQTKDGRIIPVLAQSIEIISIGFFVKDHSAIIWRGPMASKTIYQLLSVTKWDNLDYLIIDMPPGTGDIHLSILENYHLDGVIIVTTPQKISEIDVIRSIDLYQKLNLPILGIIENMSYMLKNNSGGHLSQKYNIPLIAQMPITPQIAEACDKSLPLTNLLTLPLEKYLQ</sequence>
<keyword id="KW-0067">ATP-binding</keyword>
<keyword id="KW-0378">Hydrolase</keyword>
<keyword id="KW-0408">Iron</keyword>
<keyword id="KW-0411">Iron-sulfur</keyword>
<keyword id="KW-0479">Metal-binding</keyword>
<keyword id="KW-0547">Nucleotide-binding</keyword>